<reference key="1">
    <citation type="journal article" date="1985" name="Proc. Natl. Acad. Sci. U.S.A.">
        <title>Nucleotide sequence of F0-ATPase proteolipid (subunit 9) gene of maize mitochondria.</title>
        <authorList>
            <person name="Dewey R.E."/>
            <person name="Schuster A.M."/>
            <person name="Levings C.S. III"/>
            <person name="Timothy D.H."/>
        </authorList>
    </citation>
    <scope>NUCLEOTIDE SEQUENCE [GENOMIC DNA]</scope>
</reference>
<reference key="2">
    <citation type="journal article" date="1986" name="Mol. Gen. Genet.">
        <title>The tobacco mitochondrial ATPase subunit 9 gene is closely linked to an open reading frame for a ribosomal protein.</title>
        <authorList>
            <person name="Bland M.M."/>
            <person name="Levings C.S. III"/>
            <person name="Matzinger D.F."/>
        </authorList>
    </citation>
    <scope>NUCLEOTIDE SEQUENCE [GENOMIC DNA]</scope>
    <source>
        <strain>cv. B73</strain>
    </source>
</reference>
<reference key="3">
    <citation type="journal article" date="1996" name="Curr. Genet.">
        <title>Developmental- and tissue-specificity of RNA editing in mitochondria of suspension-cultured maize cells and seedlings.</title>
        <authorList>
            <person name="Grosskopf D."/>
            <person name="Mulligan R.M."/>
        </authorList>
    </citation>
    <scope>RNA EDITING</scope>
</reference>
<proteinExistence type="evidence at transcript level"/>
<organism>
    <name type="scientific">Zea mays</name>
    <name type="common">Maize</name>
    <dbReference type="NCBI Taxonomy" id="4577"/>
    <lineage>
        <taxon>Eukaryota</taxon>
        <taxon>Viridiplantae</taxon>
        <taxon>Streptophyta</taxon>
        <taxon>Embryophyta</taxon>
        <taxon>Tracheophyta</taxon>
        <taxon>Spermatophyta</taxon>
        <taxon>Magnoliopsida</taxon>
        <taxon>Liliopsida</taxon>
        <taxon>Poales</taxon>
        <taxon>Poaceae</taxon>
        <taxon>PACMAD clade</taxon>
        <taxon>Panicoideae</taxon>
        <taxon>Andropogonodae</taxon>
        <taxon>Andropogoneae</taxon>
        <taxon>Tripsacinae</taxon>
        <taxon>Zea</taxon>
    </lineage>
</organism>
<sequence length="74" mass="7557">MLEGAKLIGAGAATIALAGAAVGIGNVFSSLIHSVARNPSLAKQLFGYAILGFALTEAIALFALMMAFLILFVF</sequence>
<protein>
    <recommendedName>
        <fullName>ATP synthase subunit 9, mitochondrial</fullName>
    </recommendedName>
    <alternativeName>
        <fullName>Lipid-binding protein</fullName>
    </alternativeName>
</protein>
<accession>P00840</accession>
<keyword id="KW-0067">ATP-binding</keyword>
<keyword id="KW-0138">CF(0)</keyword>
<keyword id="KW-0375">Hydrogen ion transport</keyword>
<keyword id="KW-0406">Ion transport</keyword>
<keyword id="KW-0446">Lipid-binding</keyword>
<keyword id="KW-0472">Membrane</keyword>
<keyword id="KW-0496">Mitochondrion</keyword>
<keyword id="KW-0547">Nucleotide-binding</keyword>
<keyword id="KW-0691">RNA editing</keyword>
<keyword id="KW-0812">Transmembrane</keyword>
<keyword id="KW-1133">Transmembrane helix</keyword>
<keyword id="KW-0813">Transport</keyword>
<evidence type="ECO:0000250" key="1"/>
<evidence type="ECO:0000255" key="2"/>
<evidence type="ECO:0000269" key="3">
    <source>
    </source>
</evidence>
<evidence type="ECO:0000305" key="4"/>
<comment type="function">
    <text>This protein is one of the chains of the nonenzymatic membrane component (F0) of mitochondrial ATPase.</text>
</comment>
<comment type="subunit">
    <text>F-type ATPases have 2 components, CF(1) - the catalytic core - and CF(0) - the membrane proton channel. CF(1) has five subunits: alpha(3), beta(3), gamma(1), delta(1), epsilon(1). CF(0) has three main subunits: a, b and c.</text>
</comment>
<comment type="subcellular location">
    <subcellularLocation>
        <location evidence="4">Mitochondrion membrane</location>
        <topology evidence="4">Multi-pass membrane protein</topology>
    </subcellularLocation>
</comment>
<comment type="RNA editing">
    <location>
        <position position="7" evidence="3"/>
    </location>
    <location>
        <position position="28" evidence="3"/>
    </location>
    <location>
        <position position="31" evidence="3"/>
    </location>
    <location>
        <position position="45" evidence="3"/>
    </location>
    <location>
        <position position="61" evidence="3"/>
    </location>
    <location>
        <position position="64" evidence="3"/>
    </location>
    <location>
        <position position="71" evidence="3"/>
    </location>
</comment>
<comment type="similarity">
    <text evidence="4">Belongs to the ATPase C chain family.</text>
</comment>
<name>ATP9_MAIZE</name>
<geneLocation type="mitochondrion"/>
<gene>
    <name type="primary">ATP9</name>
</gene>
<dbReference type="EMBL" id="M10408">
    <property type="protein sequence ID" value="AAA70271.1"/>
    <property type="status" value="ALT_SEQ"/>
    <property type="molecule type" value="Genomic_DNA"/>
</dbReference>
<dbReference type="EMBL" id="M18339">
    <property type="protein sequence ID" value="AAA70273.1"/>
    <property type="status" value="ALT_SEQ"/>
    <property type="molecule type" value="Genomic_DNA"/>
</dbReference>
<dbReference type="PIR" id="A01041">
    <property type="entry name" value="LWZMA"/>
</dbReference>
<dbReference type="SMR" id="P00840"/>
<dbReference type="MaizeGDB" id="69203"/>
<dbReference type="OrthoDB" id="1932197at2759"/>
<dbReference type="GO" id="GO:0031966">
    <property type="term" value="C:mitochondrial membrane"/>
    <property type="evidence" value="ECO:0007669"/>
    <property type="project" value="UniProtKB-SubCell"/>
</dbReference>
<dbReference type="GO" id="GO:0045259">
    <property type="term" value="C:proton-transporting ATP synthase complex"/>
    <property type="evidence" value="ECO:0007669"/>
    <property type="project" value="UniProtKB-KW"/>
</dbReference>
<dbReference type="GO" id="GO:0033177">
    <property type="term" value="C:proton-transporting two-sector ATPase complex, proton-transporting domain"/>
    <property type="evidence" value="ECO:0007669"/>
    <property type="project" value="InterPro"/>
</dbReference>
<dbReference type="GO" id="GO:0005524">
    <property type="term" value="F:ATP binding"/>
    <property type="evidence" value="ECO:0007669"/>
    <property type="project" value="UniProtKB-KW"/>
</dbReference>
<dbReference type="GO" id="GO:0008289">
    <property type="term" value="F:lipid binding"/>
    <property type="evidence" value="ECO:0007669"/>
    <property type="project" value="UniProtKB-KW"/>
</dbReference>
<dbReference type="GO" id="GO:0015078">
    <property type="term" value="F:proton transmembrane transporter activity"/>
    <property type="evidence" value="ECO:0007669"/>
    <property type="project" value="InterPro"/>
</dbReference>
<dbReference type="GO" id="GO:0015986">
    <property type="term" value="P:proton motive force-driven ATP synthesis"/>
    <property type="evidence" value="ECO:0007669"/>
    <property type="project" value="InterPro"/>
</dbReference>
<dbReference type="CDD" id="cd18182">
    <property type="entry name" value="ATP-synt_Fo_c_ATP5G3"/>
    <property type="match status" value="1"/>
</dbReference>
<dbReference type="FunFam" id="1.20.20.10:FF:000005">
    <property type="entry name" value="ATP synthase subunit 9, mitochondrial"/>
    <property type="match status" value="1"/>
</dbReference>
<dbReference type="Gene3D" id="1.20.20.10">
    <property type="entry name" value="F1F0 ATP synthase subunit C"/>
    <property type="match status" value="1"/>
</dbReference>
<dbReference type="HAMAP" id="MF_01396">
    <property type="entry name" value="ATP_synth_c_bact"/>
    <property type="match status" value="1"/>
</dbReference>
<dbReference type="InterPro" id="IPR000454">
    <property type="entry name" value="ATP_synth_F0_csu"/>
</dbReference>
<dbReference type="InterPro" id="IPR020537">
    <property type="entry name" value="ATP_synth_F0_csu_DDCD_BS"/>
</dbReference>
<dbReference type="InterPro" id="IPR038662">
    <property type="entry name" value="ATP_synth_F0_csu_sf"/>
</dbReference>
<dbReference type="InterPro" id="IPR002379">
    <property type="entry name" value="ATPase_proteolipid_c-like_dom"/>
</dbReference>
<dbReference type="InterPro" id="IPR035921">
    <property type="entry name" value="F/V-ATP_Csub_sf"/>
</dbReference>
<dbReference type="PANTHER" id="PTHR10031">
    <property type="entry name" value="ATP SYNTHASE LIPID-BINDING PROTEIN, MITOCHONDRIAL"/>
    <property type="match status" value="1"/>
</dbReference>
<dbReference type="PANTHER" id="PTHR10031:SF0">
    <property type="entry name" value="ATPASE PROTEIN 9"/>
    <property type="match status" value="1"/>
</dbReference>
<dbReference type="Pfam" id="PF00137">
    <property type="entry name" value="ATP-synt_C"/>
    <property type="match status" value="1"/>
</dbReference>
<dbReference type="PRINTS" id="PR00124">
    <property type="entry name" value="ATPASEC"/>
</dbReference>
<dbReference type="SUPFAM" id="SSF81333">
    <property type="entry name" value="F1F0 ATP synthase subunit C"/>
    <property type="match status" value="1"/>
</dbReference>
<dbReference type="PROSITE" id="PS00605">
    <property type="entry name" value="ATPASE_C"/>
    <property type="match status" value="1"/>
</dbReference>
<feature type="chain" id="PRO_0000112214" description="ATP synthase subunit 9, mitochondrial">
    <location>
        <begin position="1"/>
        <end position="74"/>
    </location>
</feature>
<feature type="transmembrane region" description="Helical" evidence="2">
    <location>
        <begin position="8"/>
        <end position="28"/>
    </location>
</feature>
<feature type="transmembrane region" description="Helical" evidence="2">
    <location>
        <begin position="45"/>
        <end position="72"/>
    </location>
</feature>
<feature type="site" description="Reversibly protonated during proton transport" evidence="1">
    <location>
        <position position="57"/>
    </location>
</feature>